<accession>A3NW63</accession>
<reference key="1">
    <citation type="journal article" date="2010" name="Genome Biol. Evol.">
        <title>Continuing evolution of Burkholderia mallei through genome reduction and large-scale rearrangements.</title>
        <authorList>
            <person name="Losada L."/>
            <person name="Ronning C.M."/>
            <person name="DeShazer D."/>
            <person name="Woods D."/>
            <person name="Fedorova N."/>
            <person name="Kim H.S."/>
            <person name="Shabalina S.A."/>
            <person name="Pearson T.R."/>
            <person name="Brinkac L."/>
            <person name="Tan P."/>
            <person name="Nandi T."/>
            <person name="Crabtree J."/>
            <person name="Badger J."/>
            <person name="Beckstrom-Sternberg S."/>
            <person name="Saqib M."/>
            <person name="Schutzer S.E."/>
            <person name="Keim P."/>
            <person name="Nierman W.C."/>
        </authorList>
    </citation>
    <scope>NUCLEOTIDE SEQUENCE [LARGE SCALE GENOMIC DNA]</scope>
    <source>
        <strain>1106a</strain>
    </source>
</reference>
<name>KTHY_BURP0</name>
<sequence>MARGKFITFEGIDGAGKTTHLQWFCDRLQERLGPTGRHVVVTREPGGTQLGETLREILLNQPMDLETEALLMFAGRREHLALVIEPALARGDWVVSDRFTDATFAYQGGGRGLPRDKLEALERWVQGGFQPDLTVLFDVQPQVASARRGAVRMPDKFESESDAFFARTRAEYLRRAHEAPHRFAIVDSSESIPQIRRQLEGVLAAL</sequence>
<proteinExistence type="inferred from homology"/>
<dbReference type="EC" id="2.7.4.9" evidence="1"/>
<dbReference type="EMBL" id="CP000572">
    <property type="protein sequence ID" value="ABN91626.1"/>
    <property type="molecule type" value="Genomic_DNA"/>
</dbReference>
<dbReference type="RefSeq" id="WP_004527198.1">
    <property type="nucleotide sequence ID" value="NC_009076.1"/>
</dbReference>
<dbReference type="SMR" id="A3NW63"/>
<dbReference type="GeneID" id="93060558"/>
<dbReference type="KEGG" id="bpl:BURPS1106A_2320"/>
<dbReference type="HOGENOM" id="CLU_049131_0_2_4"/>
<dbReference type="Proteomes" id="UP000006738">
    <property type="component" value="Chromosome I"/>
</dbReference>
<dbReference type="GO" id="GO:0005829">
    <property type="term" value="C:cytosol"/>
    <property type="evidence" value="ECO:0007669"/>
    <property type="project" value="TreeGrafter"/>
</dbReference>
<dbReference type="GO" id="GO:0005524">
    <property type="term" value="F:ATP binding"/>
    <property type="evidence" value="ECO:0007669"/>
    <property type="project" value="UniProtKB-UniRule"/>
</dbReference>
<dbReference type="GO" id="GO:0004798">
    <property type="term" value="F:dTMP kinase activity"/>
    <property type="evidence" value="ECO:0007669"/>
    <property type="project" value="UniProtKB-UniRule"/>
</dbReference>
<dbReference type="GO" id="GO:0006233">
    <property type="term" value="P:dTDP biosynthetic process"/>
    <property type="evidence" value="ECO:0007669"/>
    <property type="project" value="InterPro"/>
</dbReference>
<dbReference type="GO" id="GO:0006235">
    <property type="term" value="P:dTTP biosynthetic process"/>
    <property type="evidence" value="ECO:0007669"/>
    <property type="project" value="UniProtKB-UniRule"/>
</dbReference>
<dbReference type="GO" id="GO:0006227">
    <property type="term" value="P:dUDP biosynthetic process"/>
    <property type="evidence" value="ECO:0007669"/>
    <property type="project" value="TreeGrafter"/>
</dbReference>
<dbReference type="CDD" id="cd01672">
    <property type="entry name" value="TMPK"/>
    <property type="match status" value="1"/>
</dbReference>
<dbReference type="FunFam" id="3.40.50.300:FF:000225">
    <property type="entry name" value="Thymidylate kinase"/>
    <property type="match status" value="1"/>
</dbReference>
<dbReference type="Gene3D" id="3.40.50.300">
    <property type="entry name" value="P-loop containing nucleotide triphosphate hydrolases"/>
    <property type="match status" value="1"/>
</dbReference>
<dbReference type="HAMAP" id="MF_00165">
    <property type="entry name" value="Thymidylate_kinase"/>
    <property type="match status" value="1"/>
</dbReference>
<dbReference type="InterPro" id="IPR027417">
    <property type="entry name" value="P-loop_NTPase"/>
</dbReference>
<dbReference type="InterPro" id="IPR039430">
    <property type="entry name" value="Thymidylate_kin-like_dom"/>
</dbReference>
<dbReference type="InterPro" id="IPR018094">
    <property type="entry name" value="Thymidylate_kinase"/>
</dbReference>
<dbReference type="NCBIfam" id="TIGR00041">
    <property type="entry name" value="DTMP_kinase"/>
    <property type="match status" value="1"/>
</dbReference>
<dbReference type="PANTHER" id="PTHR10344">
    <property type="entry name" value="THYMIDYLATE KINASE"/>
    <property type="match status" value="1"/>
</dbReference>
<dbReference type="PANTHER" id="PTHR10344:SF4">
    <property type="entry name" value="UMP-CMP KINASE 2, MITOCHONDRIAL"/>
    <property type="match status" value="1"/>
</dbReference>
<dbReference type="Pfam" id="PF02223">
    <property type="entry name" value="Thymidylate_kin"/>
    <property type="match status" value="1"/>
</dbReference>
<dbReference type="SUPFAM" id="SSF52540">
    <property type="entry name" value="P-loop containing nucleoside triphosphate hydrolases"/>
    <property type="match status" value="1"/>
</dbReference>
<keyword id="KW-0067">ATP-binding</keyword>
<keyword id="KW-0418">Kinase</keyword>
<keyword id="KW-0545">Nucleotide biosynthesis</keyword>
<keyword id="KW-0547">Nucleotide-binding</keyword>
<keyword id="KW-0808">Transferase</keyword>
<gene>
    <name evidence="1" type="primary">tmk</name>
    <name type="ordered locus">BURPS1106A_2320</name>
</gene>
<protein>
    <recommendedName>
        <fullName evidence="1">Thymidylate kinase</fullName>
        <ecNumber evidence="1">2.7.4.9</ecNumber>
    </recommendedName>
    <alternativeName>
        <fullName evidence="1">dTMP kinase</fullName>
    </alternativeName>
</protein>
<feature type="chain" id="PRO_1000023161" description="Thymidylate kinase">
    <location>
        <begin position="1"/>
        <end position="206"/>
    </location>
</feature>
<feature type="binding site" evidence="1">
    <location>
        <begin position="11"/>
        <end position="18"/>
    </location>
    <ligand>
        <name>ATP</name>
        <dbReference type="ChEBI" id="CHEBI:30616"/>
    </ligand>
</feature>
<organism>
    <name type="scientific">Burkholderia pseudomallei (strain 1106a)</name>
    <dbReference type="NCBI Taxonomy" id="357348"/>
    <lineage>
        <taxon>Bacteria</taxon>
        <taxon>Pseudomonadati</taxon>
        <taxon>Pseudomonadota</taxon>
        <taxon>Betaproteobacteria</taxon>
        <taxon>Burkholderiales</taxon>
        <taxon>Burkholderiaceae</taxon>
        <taxon>Burkholderia</taxon>
        <taxon>pseudomallei group</taxon>
    </lineage>
</organism>
<evidence type="ECO:0000255" key="1">
    <source>
        <dbReference type="HAMAP-Rule" id="MF_00165"/>
    </source>
</evidence>
<comment type="function">
    <text evidence="1">Phosphorylation of dTMP to form dTDP in both de novo and salvage pathways of dTTP synthesis.</text>
</comment>
<comment type="catalytic activity">
    <reaction evidence="1">
        <text>dTMP + ATP = dTDP + ADP</text>
        <dbReference type="Rhea" id="RHEA:13517"/>
        <dbReference type="ChEBI" id="CHEBI:30616"/>
        <dbReference type="ChEBI" id="CHEBI:58369"/>
        <dbReference type="ChEBI" id="CHEBI:63528"/>
        <dbReference type="ChEBI" id="CHEBI:456216"/>
        <dbReference type="EC" id="2.7.4.9"/>
    </reaction>
</comment>
<comment type="similarity">
    <text evidence="1">Belongs to the thymidylate kinase family.</text>
</comment>